<organism>
    <name type="scientific">Prochlorococcus marinus (strain AS9601)</name>
    <dbReference type="NCBI Taxonomy" id="146891"/>
    <lineage>
        <taxon>Bacteria</taxon>
        <taxon>Bacillati</taxon>
        <taxon>Cyanobacteriota</taxon>
        <taxon>Cyanophyceae</taxon>
        <taxon>Synechococcales</taxon>
        <taxon>Prochlorococcaceae</taxon>
        <taxon>Prochlorococcus</taxon>
    </lineage>
</organism>
<reference key="1">
    <citation type="journal article" date="2007" name="PLoS Genet.">
        <title>Patterns and implications of gene gain and loss in the evolution of Prochlorococcus.</title>
        <authorList>
            <person name="Kettler G.C."/>
            <person name="Martiny A.C."/>
            <person name="Huang K."/>
            <person name="Zucker J."/>
            <person name="Coleman M.L."/>
            <person name="Rodrigue S."/>
            <person name="Chen F."/>
            <person name="Lapidus A."/>
            <person name="Ferriera S."/>
            <person name="Johnson J."/>
            <person name="Steglich C."/>
            <person name="Church G.M."/>
            <person name="Richardson P."/>
            <person name="Chisholm S.W."/>
        </authorList>
    </citation>
    <scope>NUCLEOTIDE SEQUENCE [LARGE SCALE GENOMIC DNA]</scope>
    <source>
        <strain>AS9601</strain>
    </source>
</reference>
<gene>
    <name evidence="1" type="primary">queC</name>
    <name type="ordered locus">A9601_19011</name>
</gene>
<feature type="chain" id="PRO_1000069790" description="7-cyano-7-deazaguanine synthase">
    <location>
        <begin position="1"/>
        <end position="224"/>
    </location>
</feature>
<feature type="binding site" evidence="1">
    <location>
        <begin position="12"/>
        <end position="22"/>
    </location>
    <ligand>
        <name>ATP</name>
        <dbReference type="ChEBI" id="CHEBI:30616"/>
    </ligand>
</feature>
<feature type="binding site" evidence="1">
    <location>
        <position position="193"/>
    </location>
    <ligand>
        <name>Zn(2+)</name>
        <dbReference type="ChEBI" id="CHEBI:29105"/>
    </ligand>
</feature>
<feature type="binding site" evidence="1">
    <location>
        <position position="201"/>
    </location>
    <ligand>
        <name>Zn(2+)</name>
        <dbReference type="ChEBI" id="CHEBI:29105"/>
    </ligand>
</feature>
<feature type="binding site" evidence="1">
    <location>
        <position position="204"/>
    </location>
    <ligand>
        <name>Zn(2+)</name>
        <dbReference type="ChEBI" id="CHEBI:29105"/>
    </ligand>
</feature>
<feature type="binding site" evidence="1">
    <location>
        <position position="207"/>
    </location>
    <ligand>
        <name>Zn(2+)</name>
        <dbReference type="ChEBI" id="CHEBI:29105"/>
    </ligand>
</feature>
<dbReference type="EC" id="6.3.4.20" evidence="1"/>
<dbReference type="EMBL" id="CP000551">
    <property type="protein sequence ID" value="ABM71184.1"/>
    <property type="molecule type" value="Genomic_DNA"/>
</dbReference>
<dbReference type="RefSeq" id="WP_011819302.1">
    <property type="nucleotide sequence ID" value="NC_008816.1"/>
</dbReference>
<dbReference type="SMR" id="A2BTS3"/>
<dbReference type="STRING" id="146891.A9601_19011"/>
<dbReference type="KEGG" id="pmb:A9601_19011"/>
<dbReference type="eggNOG" id="COG0603">
    <property type="taxonomic scope" value="Bacteria"/>
</dbReference>
<dbReference type="HOGENOM" id="CLU_081854_1_0_3"/>
<dbReference type="OrthoDB" id="9789567at2"/>
<dbReference type="UniPathway" id="UPA00391"/>
<dbReference type="Proteomes" id="UP000002590">
    <property type="component" value="Chromosome"/>
</dbReference>
<dbReference type="GO" id="GO:0005524">
    <property type="term" value="F:ATP binding"/>
    <property type="evidence" value="ECO:0007669"/>
    <property type="project" value="UniProtKB-UniRule"/>
</dbReference>
<dbReference type="GO" id="GO:0016879">
    <property type="term" value="F:ligase activity, forming carbon-nitrogen bonds"/>
    <property type="evidence" value="ECO:0007669"/>
    <property type="project" value="UniProtKB-UniRule"/>
</dbReference>
<dbReference type="GO" id="GO:0008270">
    <property type="term" value="F:zinc ion binding"/>
    <property type="evidence" value="ECO:0007669"/>
    <property type="project" value="UniProtKB-UniRule"/>
</dbReference>
<dbReference type="GO" id="GO:0008616">
    <property type="term" value="P:queuosine biosynthetic process"/>
    <property type="evidence" value="ECO:0007669"/>
    <property type="project" value="UniProtKB-UniRule"/>
</dbReference>
<dbReference type="CDD" id="cd01995">
    <property type="entry name" value="QueC-like"/>
    <property type="match status" value="1"/>
</dbReference>
<dbReference type="Gene3D" id="3.40.50.620">
    <property type="entry name" value="HUPs"/>
    <property type="match status" value="1"/>
</dbReference>
<dbReference type="HAMAP" id="MF_01633">
    <property type="entry name" value="QueC"/>
    <property type="match status" value="1"/>
</dbReference>
<dbReference type="InterPro" id="IPR018317">
    <property type="entry name" value="QueC"/>
</dbReference>
<dbReference type="InterPro" id="IPR014729">
    <property type="entry name" value="Rossmann-like_a/b/a_fold"/>
</dbReference>
<dbReference type="NCBIfam" id="TIGR00364">
    <property type="entry name" value="7-cyano-7-deazaguanine synthase QueC"/>
    <property type="match status" value="1"/>
</dbReference>
<dbReference type="PANTHER" id="PTHR42914">
    <property type="entry name" value="7-CYANO-7-DEAZAGUANINE SYNTHASE"/>
    <property type="match status" value="1"/>
</dbReference>
<dbReference type="PANTHER" id="PTHR42914:SF1">
    <property type="entry name" value="7-CYANO-7-DEAZAGUANINE SYNTHASE"/>
    <property type="match status" value="1"/>
</dbReference>
<dbReference type="Pfam" id="PF06508">
    <property type="entry name" value="QueC"/>
    <property type="match status" value="1"/>
</dbReference>
<dbReference type="PIRSF" id="PIRSF006293">
    <property type="entry name" value="ExsB"/>
    <property type="match status" value="1"/>
</dbReference>
<dbReference type="SUPFAM" id="SSF52402">
    <property type="entry name" value="Adenine nucleotide alpha hydrolases-like"/>
    <property type="match status" value="1"/>
</dbReference>
<name>QUEC_PROMS</name>
<evidence type="ECO:0000255" key="1">
    <source>
        <dbReference type="HAMAP-Rule" id="MF_01633"/>
    </source>
</evidence>
<keyword id="KW-0067">ATP-binding</keyword>
<keyword id="KW-0436">Ligase</keyword>
<keyword id="KW-0479">Metal-binding</keyword>
<keyword id="KW-0547">Nucleotide-binding</keyword>
<keyword id="KW-0671">Queuosine biosynthesis</keyword>
<keyword id="KW-0862">Zinc</keyword>
<protein>
    <recommendedName>
        <fullName evidence="1">7-cyano-7-deazaguanine synthase</fullName>
        <ecNumber evidence="1">6.3.4.20</ecNumber>
    </recommendedName>
    <alternativeName>
        <fullName evidence="1">7-cyano-7-carbaguanine synthase</fullName>
    </alternativeName>
    <alternativeName>
        <fullName evidence="1">PreQ(0) synthase</fullName>
    </alternativeName>
    <alternativeName>
        <fullName evidence="1">Queuosine biosynthesis protein QueC</fullName>
    </alternativeName>
</protein>
<comment type="function">
    <text evidence="1">Catalyzes the ATP-dependent conversion of 7-carboxy-7-deazaguanine (CDG) to 7-cyano-7-deazaguanine (preQ(0)).</text>
</comment>
<comment type="catalytic activity">
    <reaction evidence="1">
        <text>7-carboxy-7-deazaguanine + NH4(+) + ATP = 7-cyano-7-deazaguanine + ADP + phosphate + H2O + H(+)</text>
        <dbReference type="Rhea" id="RHEA:27982"/>
        <dbReference type="ChEBI" id="CHEBI:15377"/>
        <dbReference type="ChEBI" id="CHEBI:15378"/>
        <dbReference type="ChEBI" id="CHEBI:28938"/>
        <dbReference type="ChEBI" id="CHEBI:30616"/>
        <dbReference type="ChEBI" id="CHEBI:43474"/>
        <dbReference type="ChEBI" id="CHEBI:45075"/>
        <dbReference type="ChEBI" id="CHEBI:61036"/>
        <dbReference type="ChEBI" id="CHEBI:456216"/>
        <dbReference type="EC" id="6.3.4.20"/>
    </reaction>
</comment>
<comment type="cofactor">
    <cofactor evidence="1">
        <name>Zn(2+)</name>
        <dbReference type="ChEBI" id="CHEBI:29105"/>
    </cofactor>
    <text evidence="1">Binds 1 zinc ion per subunit.</text>
</comment>
<comment type="pathway">
    <text evidence="1">Purine metabolism; 7-cyano-7-deazaguanine biosynthesis.</text>
</comment>
<comment type="similarity">
    <text evidence="1">Belongs to the QueC family.</text>
</comment>
<proteinExistence type="inferred from homology"/>
<sequence length="224" mass="25022">MTLKNKSIVVLLSGGLDSSTVTGIAKKSEAKIFGLSFDYGQRHKKELNSASIIAKHFDIDEFKIIKLDLSLWGGSSLTDTQKNIPIEGVQTNKIPNTYVPGRNTIFISVALSYAEAIDADFIGLGVNALDYSGYPDCRPDYIKKFQELADLANKRGRENNPIKLWTPLLDLNKEEIIKLAFDNHVPLDKTWSCYSGNSKPCGKCDSCRIRNAAYEKWLNNNNKK</sequence>
<accession>A2BTS3</accession>